<comment type="subcellular location">
    <subcellularLocation>
        <location evidence="1">Cell inner membrane</location>
        <topology evidence="1">Multi-pass membrane protein</topology>
    </subcellularLocation>
</comment>
<comment type="similarity">
    <text evidence="3">Belongs to the universal stress protein B family.</text>
</comment>
<proteinExistence type="inferred from homology"/>
<accession>P67687</accession>
<accession>Q8XFE3</accession>
<feature type="chain" id="PRO_0000212048" description="Universal stress protein B">
    <location>
        <begin position="1"/>
        <end position="111"/>
    </location>
</feature>
<feature type="transmembrane region" description="Helical" evidence="2">
    <location>
        <begin position="1"/>
        <end position="21"/>
    </location>
</feature>
<feature type="topological domain" description="Cytoplasmic" evidence="2">
    <location>
        <begin position="22"/>
        <end position="89"/>
    </location>
</feature>
<feature type="transmembrane region" description="Helical" evidence="2">
    <location>
        <begin position="90"/>
        <end position="110"/>
    </location>
</feature>
<feature type="topological domain" description="Periplasmic" evidence="2">
    <location>
        <position position="111"/>
    </location>
</feature>
<keyword id="KW-0997">Cell inner membrane</keyword>
<keyword id="KW-1003">Cell membrane</keyword>
<keyword id="KW-0472">Membrane</keyword>
<keyword id="KW-0812">Transmembrane</keyword>
<keyword id="KW-1133">Transmembrane helix</keyword>
<organism>
    <name type="scientific">Salmonella typhi</name>
    <dbReference type="NCBI Taxonomy" id="90370"/>
    <lineage>
        <taxon>Bacteria</taxon>
        <taxon>Pseudomonadati</taxon>
        <taxon>Pseudomonadota</taxon>
        <taxon>Gammaproteobacteria</taxon>
        <taxon>Enterobacterales</taxon>
        <taxon>Enterobacteriaceae</taxon>
        <taxon>Salmonella</taxon>
    </lineage>
</organism>
<reference key="1">
    <citation type="journal article" date="2001" name="Nature">
        <title>Complete genome sequence of a multiple drug resistant Salmonella enterica serovar Typhi CT18.</title>
        <authorList>
            <person name="Parkhill J."/>
            <person name="Dougan G."/>
            <person name="James K.D."/>
            <person name="Thomson N.R."/>
            <person name="Pickard D."/>
            <person name="Wain J."/>
            <person name="Churcher C.M."/>
            <person name="Mungall K.L."/>
            <person name="Bentley S.D."/>
            <person name="Holden M.T.G."/>
            <person name="Sebaihia M."/>
            <person name="Baker S."/>
            <person name="Basham D."/>
            <person name="Brooks K."/>
            <person name="Chillingworth T."/>
            <person name="Connerton P."/>
            <person name="Cronin A."/>
            <person name="Davis P."/>
            <person name="Davies R.M."/>
            <person name="Dowd L."/>
            <person name="White N."/>
            <person name="Farrar J."/>
            <person name="Feltwell T."/>
            <person name="Hamlin N."/>
            <person name="Haque A."/>
            <person name="Hien T.T."/>
            <person name="Holroyd S."/>
            <person name="Jagels K."/>
            <person name="Krogh A."/>
            <person name="Larsen T.S."/>
            <person name="Leather S."/>
            <person name="Moule S."/>
            <person name="O'Gaora P."/>
            <person name="Parry C."/>
            <person name="Quail M.A."/>
            <person name="Rutherford K.M."/>
            <person name="Simmonds M."/>
            <person name="Skelton J."/>
            <person name="Stevens K."/>
            <person name="Whitehead S."/>
            <person name="Barrell B.G."/>
        </authorList>
    </citation>
    <scope>NUCLEOTIDE SEQUENCE [LARGE SCALE GENOMIC DNA]</scope>
    <source>
        <strain>CT18</strain>
    </source>
</reference>
<reference key="2">
    <citation type="journal article" date="2003" name="J. Bacteriol.">
        <title>Comparative genomics of Salmonella enterica serovar Typhi strains Ty2 and CT18.</title>
        <authorList>
            <person name="Deng W."/>
            <person name="Liou S.-R."/>
            <person name="Plunkett G. III"/>
            <person name="Mayhew G.F."/>
            <person name="Rose D.J."/>
            <person name="Burland V."/>
            <person name="Kodoyianni V."/>
            <person name="Schwartz D.C."/>
            <person name="Blattner F.R."/>
        </authorList>
    </citation>
    <scope>NUCLEOTIDE SEQUENCE [LARGE SCALE GENOMIC DNA]</scope>
    <source>
        <strain>ATCC 700931 / Ty2</strain>
    </source>
</reference>
<gene>
    <name type="primary">uspB</name>
    <name type="ordered locus">STY4213</name>
    <name type="ordered locus">t3926</name>
</gene>
<evidence type="ECO:0000250" key="1"/>
<evidence type="ECO:0000255" key="2"/>
<evidence type="ECO:0000305" key="3"/>
<protein>
    <recommendedName>
        <fullName>Universal stress protein B</fullName>
    </recommendedName>
</protein>
<dbReference type="EMBL" id="AL513382">
    <property type="protein sequence ID" value="CAD08034.1"/>
    <property type="molecule type" value="Genomic_DNA"/>
</dbReference>
<dbReference type="EMBL" id="AE014613">
    <property type="protein sequence ID" value="AAO71399.1"/>
    <property type="molecule type" value="Genomic_DNA"/>
</dbReference>
<dbReference type="RefSeq" id="NP_458327.1">
    <property type="nucleotide sequence ID" value="NC_003198.1"/>
</dbReference>
<dbReference type="RefSeq" id="WP_000626193.1">
    <property type="nucleotide sequence ID" value="NZ_WSUR01000001.1"/>
</dbReference>
<dbReference type="STRING" id="220341.gene:17588047"/>
<dbReference type="GeneID" id="66757914"/>
<dbReference type="KEGG" id="stt:t3926"/>
<dbReference type="KEGG" id="sty:STY4213"/>
<dbReference type="PATRIC" id="fig|220341.7.peg.4302"/>
<dbReference type="eggNOG" id="ENOG502ZP3V">
    <property type="taxonomic scope" value="Bacteria"/>
</dbReference>
<dbReference type="HOGENOM" id="CLU_151816_0_0_6"/>
<dbReference type="OMA" id="THGQLNK"/>
<dbReference type="OrthoDB" id="6432605at2"/>
<dbReference type="Proteomes" id="UP000000541">
    <property type="component" value="Chromosome"/>
</dbReference>
<dbReference type="Proteomes" id="UP000002670">
    <property type="component" value="Chromosome"/>
</dbReference>
<dbReference type="GO" id="GO:0005886">
    <property type="term" value="C:plasma membrane"/>
    <property type="evidence" value="ECO:0007669"/>
    <property type="project" value="UniProtKB-SubCell"/>
</dbReference>
<dbReference type="HAMAP" id="MF_01088">
    <property type="entry name" value="UspB"/>
    <property type="match status" value="1"/>
</dbReference>
<dbReference type="InterPro" id="IPR019598">
    <property type="entry name" value="Universal_stress_protein_B"/>
</dbReference>
<dbReference type="NCBIfam" id="NF003435">
    <property type="entry name" value="PRK04960.1"/>
    <property type="match status" value="1"/>
</dbReference>
<dbReference type="Pfam" id="PF10625">
    <property type="entry name" value="UspB"/>
    <property type="match status" value="1"/>
</dbReference>
<name>USPB_SALTI</name>
<sequence length="111" mass="13014">MISTVSLFWALCVVCIVNMARYFSSLRALLVVLRGCDPLLYQYVDGGGFFTTHGQPNKQVRLVWYIYAQRYRDHHDEEFIRRCERVRRQFLLTSALCGLVVVSLIALMIWH</sequence>